<feature type="chain" id="PRO_1000017531" description="Large ribosomal subunit protein bL27">
    <location>
        <begin position="1"/>
        <end position="85"/>
    </location>
</feature>
<feature type="region of interest" description="Disordered" evidence="2">
    <location>
        <begin position="1"/>
        <end position="24"/>
    </location>
</feature>
<reference key="1">
    <citation type="submission" date="2005-08" db="EMBL/GenBank/DDBJ databases">
        <title>Complete sequence of chromosome 1 of Nitrosospira multiformis ATCC 25196.</title>
        <authorList>
            <person name="Copeland A."/>
            <person name="Lucas S."/>
            <person name="Lapidus A."/>
            <person name="Barry K."/>
            <person name="Detter J.C."/>
            <person name="Glavina T."/>
            <person name="Hammon N."/>
            <person name="Israni S."/>
            <person name="Pitluck S."/>
            <person name="Chain P."/>
            <person name="Malfatti S."/>
            <person name="Shin M."/>
            <person name="Vergez L."/>
            <person name="Schmutz J."/>
            <person name="Larimer F."/>
            <person name="Land M."/>
            <person name="Hauser L."/>
            <person name="Kyrpides N."/>
            <person name="Lykidis A."/>
            <person name="Richardson P."/>
        </authorList>
    </citation>
    <scope>NUCLEOTIDE SEQUENCE [LARGE SCALE GENOMIC DNA]</scope>
    <source>
        <strain>ATCC 25196 / NCIMB 11849 / C 71</strain>
    </source>
</reference>
<proteinExistence type="inferred from homology"/>
<organism>
    <name type="scientific">Nitrosospira multiformis (strain ATCC 25196 / NCIMB 11849 / C 71)</name>
    <dbReference type="NCBI Taxonomy" id="323848"/>
    <lineage>
        <taxon>Bacteria</taxon>
        <taxon>Pseudomonadati</taxon>
        <taxon>Pseudomonadota</taxon>
        <taxon>Betaproteobacteria</taxon>
        <taxon>Nitrosomonadales</taxon>
        <taxon>Nitrosomonadaceae</taxon>
        <taxon>Nitrosospira</taxon>
    </lineage>
</organism>
<protein>
    <recommendedName>
        <fullName evidence="1">Large ribosomal subunit protein bL27</fullName>
    </recommendedName>
    <alternativeName>
        <fullName evidence="3">50S ribosomal protein L27</fullName>
    </alternativeName>
</protein>
<accession>Q2Y808</accession>
<name>RL27_NITMU</name>
<gene>
    <name evidence="1" type="primary">rpmA</name>
    <name type="ordered locus">Nmul_A1816</name>
</gene>
<comment type="similarity">
    <text evidence="1">Belongs to the bacterial ribosomal protein bL27 family.</text>
</comment>
<evidence type="ECO:0000255" key="1">
    <source>
        <dbReference type="HAMAP-Rule" id="MF_00539"/>
    </source>
</evidence>
<evidence type="ECO:0000256" key="2">
    <source>
        <dbReference type="SAM" id="MobiDB-lite"/>
    </source>
</evidence>
<evidence type="ECO:0000305" key="3"/>
<dbReference type="EMBL" id="CP000103">
    <property type="protein sequence ID" value="ABB75113.1"/>
    <property type="molecule type" value="Genomic_DNA"/>
</dbReference>
<dbReference type="RefSeq" id="WP_011381133.1">
    <property type="nucleotide sequence ID" value="NC_007614.1"/>
</dbReference>
<dbReference type="SMR" id="Q2Y808"/>
<dbReference type="STRING" id="323848.Nmul_A1816"/>
<dbReference type="KEGG" id="nmu:Nmul_A1816"/>
<dbReference type="eggNOG" id="COG0211">
    <property type="taxonomic scope" value="Bacteria"/>
</dbReference>
<dbReference type="HOGENOM" id="CLU_095424_4_1_4"/>
<dbReference type="OrthoDB" id="9803474at2"/>
<dbReference type="Proteomes" id="UP000002718">
    <property type="component" value="Chromosome"/>
</dbReference>
<dbReference type="GO" id="GO:0022625">
    <property type="term" value="C:cytosolic large ribosomal subunit"/>
    <property type="evidence" value="ECO:0007669"/>
    <property type="project" value="TreeGrafter"/>
</dbReference>
<dbReference type="GO" id="GO:0003735">
    <property type="term" value="F:structural constituent of ribosome"/>
    <property type="evidence" value="ECO:0007669"/>
    <property type="project" value="InterPro"/>
</dbReference>
<dbReference type="GO" id="GO:0006412">
    <property type="term" value="P:translation"/>
    <property type="evidence" value="ECO:0007669"/>
    <property type="project" value="UniProtKB-UniRule"/>
</dbReference>
<dbReference type="FunFam" id="2.40.50.100:FF:000001">
    <property type="entry name" value="50S ribosomal protein L27"/>
    <property type="match status" value="1"/>
</dbReference>
<dbReference type="Gene3D" id="2.40.50.100">
    <property type="match status" value="1"/>
</dbReference>
<dbReference type="HAMAP" id="MF_00539">
    <property type="entry name" value="Ribosomal_bL27"/>
    <property type="match status" value="1"/>
</dbReference>
<dbReference type="InterPro" id="IPR001684">
    <property type="entry name" value="Ribosomal_bL27"/>
</dbReference>
<dbReference type="InterPro" id="IPR018261">
    <property type="entry name" value="Ribosomal_bL27_CS"/>
</dbReference>
<dbReference type="NCBIfam" id="TIGR00062">
    <property type="entry name" value="L27"/>
    <property type="match status" value="1"/>
</dbReference>
<dbReference type="PANTHER" id="PTHR15893:SF0">
    <property type="entry name" value="LARGE RIBOSOMAL SUBUNIT PROTEIN BL27M"/>
    <property type="match status" value="1"/>
</dbReference>
<dbReference type="PANTHER" id="PTHR15893">
    <property type="entry name" value="RIBOSOMAL PROTEIN L27"/>
    <property type="match status" value="1"/>
</dbReference>
<dbReference type="Pfam" id="PF01016">
    <property type="entry name" value="Ribosomal_L27"/>
    <property type="match status" value="1"/>
</dbReference>
<dbReference type="PRINTS" id="PR00063">
    <property type="entry name" value="RIBOSOMALL27"/>
</dbReference>
<dbReference type="SUPFAM" id="SSF110324">
    <property type="entry name" value="Ribosomal L27 protein-like"/>
    <property type="match status" value="1"/>
</dbReference>
<dbReference type="PROSITE" id="PS00831">
    <property type="entry name" value="RIBOSOMAL_L27"/>
    <property type="match status" value="1"/>
</dbReference>
<sequence length="85" mass="9119">MAHKKAGGSSRNGRDSNSKRLGVKRFGGELIPAGSIIIRQRGTRVHPGENVGMGKDHTLFAKVDGRVNFTVKGLPQRKTVSIIPA</sequence>
<keyword id="KW-1185">Reference proteome</keyword>
<keyword id="KW-0687">Ribonucleoprotein</keyword>
<keyword id="KW-0689">Ribosomal protein</keyword>